<reference key="1">
    <citation type="submission" date="2007-12" db="EMBL/GenBank/DDBJ databases">
        <title>Complete sequence of Methylobacterium extorquens PA1.</title>
        <authorList>
            <consortium name="US DOE Joint Genome Institute"/>
            <person name="Copeland A."/>
            <person name="Lucas S."/>
            <person name="Lapidus A."/>
            <person name="Barry K."/>
            <person name="Glavina del Rio T."/>
            <person name="Dalin E."/>
            <person name="Tice H."/>
            <person name="Pitluck S."/>
            <person name="Saunders E."/>
            <person name="Brettin T."/>
            <person name="Bruce D."/>
            <person name="Detter J.C."/>
            <person name="Han C."/>
            <person name="Schmutz J."/>
            <person name="Larimer F."/>
            <person name="Land M."/>
            <person name="Hauser L."/>
            <person name="Kyrpides N."/>
            <person name="Kim E."/>
            <person name="Marx C."/>
            <person name="Richardson P."/>
        </authorList>
    </citation>
    <scope>NUCLEOTIDE SEQUENCE [LARGE SCALE GENOMIC DNA]</scope>
    <source>
        <strain>PA1</strain>
    </source>
</reference>
<accession>A9W4S3</accession>
<feature type="chain" id="PRO_1000140866" description="Small ribosomal subunit protein uS5">
    <location>
        <begin position="1"/>
        <end position="192"/>
    </location>
</feature>
<feature type="domain" description="S5 DRBM" evidence="1">
    <location>
        <begin position="20"/>
        <end position="83"/>
    </location>
</feature>
<feature type="region of interest" description="Disordered" evidence="2">
    <location>
        <begin position="162"/>
        <end position="192"/>
    </location>
</feature>
<keyword id="KW-0687">Ribonucleoprotein</keyword>
<keyword id="KW-0689">Ribosomal protein</keyword>
<keyword id="KW-0694">RNA-binding</keyword>
<keyword id="KW-0699">rRNA-binding</keyword>
<proteinExistence type="inferred from homology"/>
<protein>
    <recommendedName>
        <fullName evidence="1">Small ribosomal subunit protein uS5</fullName>
    </recommendedName>
    <alternativeName>
        <fullName evidence="3">30S ribosomal protein S5</fullName>
    </alternativeName>
</protein>
<dbReference type="EMBL" id="CP000908">
    <property type="protein sequence ID" value="ABY30579.1"/>
    <property type="molecule type" value="Genomic_DNA"/>
</dbReference>
<dbReference type="RefSeq" id="WP_012253652.1">
    <property type="nucleotide sequence ID" value="NC_010172.1"/>
</dbReference>
<dbReference type="SMR" id="A9W4S3"/>
<dbReference type="GeneID" id="72989872"/>
<dbReference type="KEGG" id="mex:Mext_2184"/>
<dbReference type="eggNOG" id="COG0098">
    <property type="taxonomic scope" value="Bacteria"/>
</dbReference>
<dbReference type="HOGENOM" id="CLU_065898_2_2_5"/>
<dbReference type="BioCyc" id="MEXT419610:MEXT_RS11025-MONOMER"/>
<dbReference type="GO" id="GO:0015935">
    <property type="term" value="C:small ribosomal subunit"/>
    <property type="evidence" value="ECO:0007669"/>
    <property type="project" value="InterPro"/>
</dbReference>
<dbReference type="GO" id="GO:0019843">
    <property type="term" value="F:rRNA binding"/>
    <property type="evidence" value="ECO:0007669"/>
    <property type="project" value="UniProtKB-UniRule"/>
</dbReference>
<dbReference type="GO" id="GO:0003735">
    <property type="term" value="F:structural constituent of ribosome"/>
    <property type="evidence" value="ECO:0007669"/>
    <property type="project" value="InterPro"/>
</dbReference>
<dbReference type="GO" id="GO:0006412">
    <property type="term" value="P:translation"/>
    <property type="evidence" value="ECO:0007669"/>
    <property type="project" value="UniProtKB-UniRule"/>
</dbReference>
<dbReference type="FunFam" id="3.30.160.20:FF:000001">
    <property type="entry name" value="30S ribosomal protein S5"/>
    <property type="match status" value="1"/>
</dbReference>
<dbReference type="FunFam" id="3.30.230.10:FF:000002">
    <property type="entry name" value="30S ribosomal protein S5"/>
    <property type="match status" value="1"/>
</dbReference>
<dbReference type="Gene3D" id="3.30.160.20">
    <property type="match status" value="1"/>
</dbReference>
<dbReference type="Gene3D" id="3.30.230.10">
    <property type="match status" value="1"/>
</dbReference>
<dbReference type="HAMAP" id="MF_01307_B">
    <property type="entry name" value="Ribosomal_uS5_B"/>
    <property type="match status" value="1"/>
</dbReference>
<dbReference type="InterPro" id="IPR020568">
    <property type="entry name" value="Ribosomal_Su5_D2-typ_SF"/>
</dbReference>
<dbReference type="InterPro" id="IPR000851">
    <property type="entry name" value="Ribosomal_uS5"/>
</dbReference>
<dbReference type="InterPro" id="IPR005712">
    <property type="entry name" value="Ribosomal_uS5_bac-type"/>
</dbReference>
<dbReference type="InterPro" id="IPR005324">
    <property type="entry name" value="Ribosomal_uS5_C"/>
</dbReference>
<dbReference type="InterPro" id="IPR013810">
    <property type="entry name" value="Ribosomal_uS5_N"/>
</dbReference>
<dbReference type="InterPro" id="IPR018192">
    <property type="entry name" value="Ribosomal_uS5_N_CS"/>
</dbReference>
<dbReference type="InterPro" id="IPR014721">
    <property type="entry name" value="Ribsml_uS5_D2-typ_fold_subgr"/>
</dbReference>
<dbReference type="NCBIfam" id="TIGR01021">
    <property type="entry name" value="rpsE_bact"/>
    <property type="match status" value="1"/>
</dbReference>
<dbReference type="PANTHER" id="PTHR48277">
    <property type="entry name" value="MITOCHONDRIAL RIBOSOMAL PROTEIN S5"/>
    <property type="match status" value="1"/>
</dbReference>
<dbReference type="PANTHER" id="PTHR48277:SF1">
    <property type="entry name" value="MITOCHONDRIAL RIBOSOMAL PROTEIN S5"/>
    <property type="match status" value="1"/>
</dbReference>
<dbReference type="Pfam" id="PF00333">
    <property type="entry name" value="Ribosomal_S5"/>
    <property type="match status" value="1"/>
</dbReference>
<dbReference type="Pfam" id="PF03719">
    <property type="entry name" value="Ribosomal_S5_C"/>
    <property type="match status" value="1"/>
</dbReference>
<dbReference type="SUPFAM" id="SSF54768">
    <property type="entry name" value="dsRNA-binding domain-like"/>
    <property type="match status" value="1"/>
</dbReference>
<dbReference type="SUPFAM" id="SSF54211">
    <property type="entry name" value="Ribosomal protein S5 domain 2-like"/>
    <property type="match status" value="1"/>
</dbReference>
<dbReference type="PROSITE" id="PS00585">
    <property type="entry name" value="RIBOSOMAL_S5"/>
    <property type="match status" value="1"/>
</dbReference>
<dbReference type="PROSITE" id="PS50881">
    <property type="entry name" value="S5_DSRBD"/>
    <property type="match status" value="1"/>
</dbReference>
<evidence type="ECO:0000255" key="1">
    <source>
        <dbReference type="HAMAP-Rule" id="MF_01307"/>
    </source>
</evidence>
<evidence type="ECO:0000256" key="2">
    <source>
        <dbReference type="SAM" id="MobiDB-lite"/>
    </source>
</evidence>
<evidence type="ECO:0000305" key="3"/>
<comment type="function">
    <text evidence="1">With S4 and S12 plays an important role in translational accuracy.</text>
</comment>
<comment type="function">
    <text evidence="1">Located at the back of the 30S subunit body where it stabilizes the conformation of the head with respect to the body.</text>
</comment>
<comment type="subunit">
    <text evidence="1">Part of the 30S ribosomal subunit. Contacts proteins S4 and S8.</text>
</comment>
<comment type="domain">
    <text>The N-terminal domain interacts with the head of the 30S subunit; the C-terminal domain interacts with the body and contacts protein S4. The interaction surface between S4 and S5 is involved in control of translational fidelity.</text>
</comment>
<comment type="similarity">
    <text evidence="1">Belongs to the universal ribosomal protein uS5 family.</text>
</comment>
<organism>
    <name type="scientific">Methylorubrum extorquens (strain PA1)</name>
    <name type="common">Methylobacterium extorquens</name>
    <dbReference type="NCBI Taxonomy" id="419610"/>
    <lineage>
        <taxon>Bacteria</taxon>
        <taxon>Pseudomonadati</taxon>
        <taxon>Pseudomonadota</taxon>
        <taxon>Alphaproteobacteria</taxon>
        <taxon>Hyphomicrobiales</taxon>
        <taxon>Methylobacteriaceae</taxon>
        <taxon>Methylorubrum</taxon>
    </lineage>
</organism>
<gene>
    <name evidence="1" type="primary">rpsE</name>
    <name type="ordered locus">Mext_2184</name>
</gene>
<name>RS5_METEP</name>
<sequence length="192" mass="20823">MAREREGRRRDDREERDSEFVDKLVHINRVAKVVKGGRRFGFAALVVVGDQKGRVGFGHGKAREVPEAIRKATEAAKRGLIRVSLREGRTLHHDVNGRHGAGKVILRAAPQGTGIIAGGPMRAVFETLGMQDVVAKSLGSSNPYNLVRATFDALKNEDSPRSVAARRGLKVSALQARRRDADPADTSEAAVA</sequence>